<dbReference type="EMBL" id="X07859">
    <property type="protein sequence ID" value="CAA30707.1"/>
    <property type="molecule type" value="mRNA"/>
</dbReference>
<dbReference type="EMBL" id="AAFI02000035">
    <property type="protein sequence ID" value="EAL67364.1"/>
    <property type="molecule type" value="Genomic_DNA"/>
</dbReference>
<dbReference type="PIR" id="A28299">
    <property type="entry name" value="A28299"/>
</dbReference>
<dbReference type="RefSeq" id="XP_641346.1">
    <property type="nucleotide sequence ID" value="XM_636254.1"/>
</dbReference>
<dbReference type="FunCoup" id="P08797">
    <property type="interactions" value="377"/>
</dbReference>
<dbReference type="STRING" id="44689.P08797"/>
<dbReference type="PaxDb" id="44689-DDB0231127"/>
<dbReference type="EnsemblProtists" id="EAL67364">
    <property type="protein sequence ID" value="EAL67364"/>
    <property type="gene ID" value="DDB_G0294473"/>
</dbReference>
<dbReference type="GeneID" id="8622480"/>
<dbReference type="KEGG" id="ddi:DDB_G0294473"/>
<dbReference type="dictyBase" id="DDB_G0294473">
    <property type="gene designation" value="staA"/>
</dbReference>
<dbReference type="VEuPathDB" id="AmoebaDB:DDB_G0294473"/>
<dbReference type="eggNOG" id="ENOG502RHTW">
    <property type="taxonomic scope" value="Eukaryota"/>
</dbReference>
<dbReference type="HOGENOM" id="CLU_117893_0_0_1"/>
<dbReference type="InParanoid" id="P08797"/>
<dbReference type="OMA" id="DAVCSCI"/>
<dbReference type="PhylomeDB" id="P08797"/>
<dbReference type="PRO" id="PR:P08797"/>
<dbReference type="Proteomes" id="UP000002195">
    <property type="component" value="Chromosome 3"/>
</dbReference>
<dbReference type="GO" id="GO:0031012">
    <property type="term" value="C:extracellular matrix"/>
    <property type="evidence" value="ECO:0000318"/>
    <property type="project" value="GO_Central"/>
</dbReference>
<dbReference type="GO" id="GO:0005576">
    <property type="term" value="C:extracellular region"/>
    <property type="evidence" value="ECO:0007669"/>
    <property type="project" value="UniProtKB-SubCell"/>
</dbReference>
<dbReference type="GO" id="GO:0005201">
    <property type="term" value="F:extracellular matrix structural constituent"/>
    <property type="evidence" value="ECO:0000318"/>
    <property type="project" value="GO_Central"/>
</dbReference>
<dbReference type="GO" id="GO:0004553">
    <property type="term" value="F:hydrolase activity, hydrolyzing O-glycosyl compounds"/>
    <property type="evidence" value="ECO:0007669"/>
    <property type="project" value="InterPro"/>
</dbReference>
<dbReference type="GO" id="GO:0030247">
    <property type="term" value="F:polysaccharide binding"/>
    <property type="evidence" value="ECO:0007669"/>
    <property type="project" value="InterPro"/>
</dbReference>
<dbReference type="GO" id="GO:0030154">
    <property type="term" value="P:cell differentiation"/>
    <property type="evidence" value="ECO:0007669"/>
    <property type="project" value="UniProtKB-KW"/>
</dbReference>
<dbReference type="GO" id="GO:0030198">
    <property type="term" value="P:extracellular matrix organization"/>
    <property type="evidence" value="ECO:0000318"/>
    <property type="project" value="GO_Central"/>
</dbReference>
<dbReference type="GO" id="GO:0030435">
    <property type="term" value="P:sporulation resulting in formation of a cellular spore"/>
    <property type="evidence" value="ECO:0007669"/>
    <property type="project" value="UniProtKB-KW"/>
</dbReference>
<dbReference type="FunFam" id="2.60.40.290:FF:000002">
    <property type="entry name" value="Stalk-specific protein B"/>
    <property type="match status" value="1"/>
</dbReference>
<dbReference type="Gene3D" id="2.60.40.290">
    <property type="match status" value="1"/>
</dbReference>
<dbReference type="InterPro" id="IPR008965">
    <property type="entry name" value="CBM2/CBM3_carb-bd_dom_sf"/>
</dbReference>
<dbReference type="InterPro" id="IPR012291">
    <property type="entry name" value="CBM2_carb-bd_dom_sf"/>
</dbReference>
<dbReference type="InterPro" id="IPR019028">
    <property type="entry name" value="CBM_49"/>
</dbReference>
<dbReference type="InterPro" id="IPR052879">
    <property type="entry name" value="Dd_Spore_Germination_Stalk"/>
</dbReference>
<dbReference type="PANTHER" id="PTHR33239:SF11">
    <property type="entry name" value="CARBOHYDRATE BINDING DOMAIN-CONTAINING PROTEIN-RELATED"/>
    <property type="match status" value="1"/>
</dbReference>
<dbReference type="PANTHER" id="PTHR33239">
    <property type="entry name" value="CELLULOSE-BINDING DOMAIN-CONTAINING PROTEIN-RELATED"/>
    <property type="match status" value="1"/>
</dbReference>
<dbReference type="Pfam" id="PF09478">
    <property type="entry name" value="CBM49"/>
    <property type="match status" value="1"/>
</dbReference>
<dbReference type="SMART" id="SM01063">
    <property type="entry name" value="CBM49"/>
    <property type="match status" value="1"/>
</dbReference>
<dbReference type="SUPFAM" id="SSF49384">
    <property type="entry name" value="Carbohydrate-binding domain"/>
    <property type="match status" value="1"/>
</dbReference>
<evidence type="ECO:0000255" key="1"/>
<evidence type="ECO:0000269" key="2">
    <source>
    </source>
</evidence>
<evidence type="ECO:0000305" key="3"/>
<comment type="subcellular location">
    <subcellularLocation>
        <location evidence="3">Secreted</location>
    </subcellularLocation>
</comment>
<comment type="developmental stage">
    <text evidence="2">Selectively expressed in stalk cells.</text>
</comment>
<comment type="induction">
    <text evidence="2">By the stalk-specific morphogen DIF (Differentiation inducing factor).</text>
</comment>
<feature type="signal peptide" evidence="1">
    <location>
        <begin position="1"/>
        <end position="19"/>
    </location>
</feature>
<feature type="chain" id="PRO_0000021106" description="Stalk-specific protein A">
    <location>
        <begin position="20"/>
        <end position="157"/>
    </location>
</feature>
<feature type="sequence conflict" description="In Ref. 1; CAA30707." evidence="3" ref="1">
    <original>A</original>
    <variation>D</variation>
    <location>
        <position position="95"/>
    </location>
</feature>
<feature type="sequence conflict" description="In Ref. 1; CAA30707." evidence="3" ref="1">
    <original>R</original>
    <variation>K</variation>
    <location>
        <position position="101"/>
    </location>
</feature>
<name>STAA_DICDI</name>
<proteinExistence type="evidence at transcript level"/>
<gene>
    <name type="primary">staA</name>
    <name type="ORF">DDB_G0294473</name>
</gene>
<reference key="1">
    <citation type="journal article" date="1988" name="Nucleic Acids Res.">
        <title>Complete nucleotide sequence of a DIF-inducible, stalk-specific mRNA from Dictyostelium discoideum.</title>
        <authorList>
            <person name="McRobbie S.J."/>
            <person name="Ceccarelli A."/>
        </authorList>
    </citation>
    <scope>NUCLEOTIDE SEQUENCE [MRNA]</scope>
    <scope>DEVELOPMENTAL STAGE</scope>
    <scope>INDUCTION</scope>
</reference>
<reference key="2">
    <citation type="journal article" date="2005" name="Nature">
        <title>The genome of the social amoeba Dictyostelium discoideum.</title>
        <authorList>
            <person name="Eichinger L."/>
            <person name="Pachebat J.A."/>
            <person name="Gloeckner G."/>
            <person name="Rajandream M.A."/>
            <person name="Sucgang R."/>
            <person name="Berriman M."/>
            <person name="Song J."/>
            <person name="Olsen R."/>
            <person name="Szafranski K."/>
            <person name="Xu Q."/>
            <person name="Tunggal B."/>
            <person name="Kummerfeld S."/>
            <person name="Madera M."/>
            <person name="Konfortov B.A."/>
            <person name="Rivero F."/>
            <person name="Bankier A.T."/>
            <person name="Lehmann R."/>
            <person name="Hamlin N."/>
            <person name="Davies R."/>
            <person name="Gaudet P."/>
            <person name="Fey P."/>
            <person name="Pilcher K."/>
            <person name="Chen G."/>
            <person name="Saunders D."/>
            <person name="Sodergren E.J."/>
            <person name="Davis P."/>
            <person name="Kerhornou A."/>
            <person name="Nie X."/>
            <person name="Hall N."/>
            <person name="Anjard C."/>
            <person name="Hemphill L."/>
            <person name="Bason N."/>
            <person name="Farbrother P."/>
            <person name="Desany B."/>
            <person name="Just E."/>
            <person name="Morio T."/>
            <person name="Rost R."/>
            <person name="Churcher C.M."/>
            <person name="Cooper J."/>
            <person name="Haydock S."/>
            <person name="van Driessche N."/>
            <person name="Cronin A."/>
            <person name="Goodhead I."/>
            <person name="Muzny D.M."/>
            <person name="Mourier T."/>
            <person name="Pain A."/>
            <person name="Lu M."/>
            <person name="Harper D."/>
            <person name="Lindsay R."/>
            <person name="Hauser H."/>
            <person name="James K.D."/>
            <person name="Quiles M."/>
            <person name="Madan Babu M."/>
            <person name="Saito T."/>
            <person name="Buchrieser C."/>
            <person name="Wardroper A."/>
            <person name="Felder M."/>
            <person name="Thangavelu M."/>
            <person name="Johnson D."/>
            <person name="Knights A."/>
            <person name="Loulseged H."/>
            <person name="Mungall K.L."/>
            <person name="Oliver K."/>
            <person name="Price C."/>
            <person name="Quail M.A."/>
            <person name="Urushihara H."/>
            <person name="Hernandez J."/>
            <person name="Rabbinowitsch E."/>
            <person name="Steffen D."/>
            <person name="Sanders M."/>
            <person name="Ma J."/>
            <person name="Kohara Y."/>
            <person name="Sharp S."/>
            <person name="Simmonds M.N."/>
            <person name="Spiegler S."/>
            <person name="Tivey A."/>
            <person name="Sugano S."/>
            <person name="White B."/>
            <person name="Walker D."/>
            <person name="Woodward J.R."/>
            <person name="Winckler T."/>
            <person name="Tanaka Y."/>
            <person name="Shaulsky G."/>
            <person name="Schleicher M."/>
            <person name="Weinstock G.M."/>
            <person name="Rosenthal A."/>
            <person name="Cox E.C."/>
            <person name="Chisholm R.L."/>
            <person name="Gibbs R.A."/>
            <person name="Loomis W.F."/>
            <person name="Platzer M."/>
            <person name="Kay R.R."/>
            <person name="Williams J.G."/>
            <person name="Dear P.H."/>
            <person name="Noegel A.A."/>
            <person name="Barrell B.G."/>
            <person name="Kuspa A."/>
        </authorList>
    </citation>
    <scope>NUCLEOTIDE SEQUENCE [LARGE SCALE GENOMIC DNA]</scope>
    <source>
        <strain>AX4</strain>
    </source>
</reference>
<keyword id="KW-0217">Developmental protein</keyword>
<keyword id="KW-0221">Differentiation</keyword>
<keyword id="KW-1185">Reference proteome</keyword>
<keyword id="KW-0964">Secreted</keyword>
<keyword id="KW-0732">Signal</keyword>
<keyword id="KW-0749">Sporulation</keyword>
<protein>
    <recommendedName>
        <fullName>Stalk-specific protein A</fullName>
    </recommendedName>
    <alternativeName>
        <fullName>DIF-inducible protein</fullName>
    </alternativeName>
</protein>
<organism>
    <name type="scientific">Dictyostelium discoideum</name>
    <name type="common">Social amoeba</name>
    <dbReference type="NCBI Taxonomy" id="44689"/>
    <lineage>
        <taxon>Eukaryota</taxon>
        <taxon>Amoebozoa</taxon>
        <taxon>Evosea</taxon>
        <taxon>Eumycetozoa</taxon>
        <taxon>Dictyostelia</taxon>
        <taxon>Dictyosteliales</taxon>
        <taxon>Dictyosteliaceae</taxon>
        <taxon>Dictyostelium</taxon>
    </lineage>
</organism>
<sequence>MRSILILLSLLLTIAFASASFPYQCGPYSCQFGQVCRIDNGVCNCIPINDCHEVSLSTKVVGTWVDGSRGNKRFTQYDITITNNLNTNIKQIYIATDYTLRLRDHSNTSIWNVNLLPNGILTLPSYQPSINAHASFTFGFILEGTQPANLNVLSVSF</sequence>
<accession>P08797</accession>
<accession>Q54VK9</accession>